<dbReference type="EC" id="1.1.98.2"/>
<dbReference type="EMBL" id="AF041061">
    <property type="protein sequence ID" value="AAC38338.1"/>
    <property type="molecule type" value="Genomic_DNA"/>
</dbReference>
<dbReference type="EMBL" id="CP000480">
    <property type="protein sequence ID" value="ABK75077.1"/>
    <property type="status" value="ALT_INIT"/>
    <property type="molecule type" value="Genomic_DNA"/>
</dbReference>
<dbReference type="EMBL" id="CP001663">
    <property type="protein sequence ID" value="AFP37241.1"/>
    <property type="molecule type" value="Genomic_DNA"/>
</dbReference>
<dbReference type="RefSeq" id="WP_003892203.1">
    <property type="nucleotide sequence ID" value="NZ_SIJM01000036.1"/>
</dbReference>
<dbReference type="RefSeq" id="YP_885182.1">
    <property type="nucleotide sequence ID" value="NC_008596.1"/>
</dbReference>
<dbReference type="SMR" id="A0QQJ4"/>
<dbReference type="STRING" id="246196.MSMEG_0777"/>
<dbReference type="PaxDb" id="246196-MSMEI_0761"/>
<dbReference type="GeneID" id="93455687"/>
<dbReference type="KEGG" id="msb:LJ00_03860"/>
<dbReference type="KEGG" id="msg:MSMEI_0761"/>
<dbReference type="KEGG" id="msm:MSMEG_0777"/>
<dbReference type="PATRIC" id="fig|246196.19.peg.772"/>
<dbReference type="eggNOG" id="COG2141">
    <property type="taxonomic scope" value="Bacteria"/>
</dbReference>
<dbReference type="OrthoDB" id="180193at2"/>
<dbReference type="BRENDA" id="1.1.98.2">
    <property type="organism ID" value="3512"/>
</dbReference>
<dbReference type="Proteomes" id="UP000000757">
    <property type="component" value="Chromosome"/>
</dbReference>
<dbReference type="Proteomes" id="UP000006158">
    <property type="component" value="Chromosome"/>
</dbReference>
<dbReference type="GO" id="GO:0070967">
    <property type="term" value="F:coenzyme F420 binding"/>
    <property type="evidence" value="ECO:0000314"/>
    <property type="project" value="UniProtKB"/>
</dbReference>
<dbReference type="GO" id="GO:0052749">
    <property type="term" value="F:glucose-6-phosphate dehydrogenase (coenzyme F420) activity"/>
    <property type="evidence" value="ECO:0007669"/>
    <property type="project" value="UniProtKB-EC"/>
</dbReference>
<dbReference type="GO" id="GO:0016614">
    <property type="term" value="F:oxidoreductase activity, acting on CH-OH group of donors"/>
    <property type="evidence" value="ECO:0000314"/>
    <property type="project" value="UniProtKB"/>
</dbReference>
<dbReference type="GO" id="GO:0016705">
    <property type="term" value="F:oxidoreductase activity, acting on paired donors, with incorporation or reduction of molecular oxygen"/>
    <property type="evidence" value="ECO:0007669"/>
    <property type="project" value="InterPro"/>
</dbReference>
<dbReference type="GO" id="GO:0042803">
    <property type="term" value="F:protein homodimerization activity"/>
    <property type="evidence" value="ECO:0000314"/>
    <property type="project" value="UniProtKB"/>
</dbReference>
<dbReference type="GO" id="GO:0005975">
    <property type="term" value="P:carbohydrate metabolic process"/>
    <property type="evidence" value="ECO:0007669"/>
    <property type="project" value="UniProtKB-UniRule"/>
</dbReference>
<dbReference type="CDD" id="cd01097">
    <property type="entry name" value="Tetrahydromethanopterin_reductase"/>
    <property type="match status" value="1"/>
</dbReference>
<dbReference type="FunFam" id="3.20.20.30:FF:000004">
    <property type="entry name" value="F420-dependent glucose-6-phosphate dehydrogenase"/>
    <property type="match status" value="1"/>
</dbReference>
<dbReference type="Gene3D" id="3.20.20.30">
    <property type="entry name" value="Luciferase-like domain"/>
    <property type="match status" value="1"/>
</dbReference>
<dbReference type="HAMAP" id="MF_02123">
    <property type="entry name" value="F420_G6P_DH"/>
    <property type="match status" value="1"/>
</dbReference>
<dbReference type="InterPro" id="IPR019944">
    <property type="entry name" value="F420-dep_G6P_DH"/>
</dbReference>
<dbReference type="InterPro" id="IPR050564">
    <property type="entry name" value="F420-G6PD/mer"/>
</dbReference>
<dbReference type="InterPro" id="IPR019945">
    <property type="entry name" value="F420_G6P_DH-rel"/>
</dbReference>
<dbReference type="InterPro" id="IPR011251">
    <property type="entry name" value="Luciferase-like_dom"/>
</dbReference>
<dbReference type="InterPro" id="IPR036661">
    <property type="entry name" value="Luciferase-like_sf"/>
</dbReference>
<dbReference type="NCBIfam" id="TIGR03554">
    <property type="entry name" value="F420_G6P_DH"/>
    <property type="match status" value="1"/>
</dbReference>
<dbReference type="NCBIfam" id="TIGR03557">
    <property type="entry name" value="F420_G6P_family"/>
    <property type="match status" value="1"/>
</dbReference>
<dbReference type="PANTHER" id="PTHR43244">
    <property type="match status" value="1"/>
</dbReference>
<dbReference type="PANTHER" id="PTHR43244:SF1">
    <property type="entry name" value="5,10-METHYLENETETRAHYDROMETHANOPTERIN REDUCTASE"/>
    <property type="match status" value="1"/>
</dbReference>
<dbReference type="Pfam" id="PF00296">
    <property type="entry name" value="Bac_luciferase"/>
    <property type="match status" value="1"/>
</dbReference>
<dbReference type="SUPFAM" id="SSF51679">
    <property type="entry name" value="Bacterial luciferase-like"/>
    <property type="match status" value="1"/>
</dbReference>
<name>FGD_MYCS2</name>
<proteinExistence type="evidence at protein level"/>
<organism>
    <name type="scientific">Mycolicibacterium smegmatis (strain ATCC 700084 / mc(2)155)</name>
    <name type="common">Mycobacterium smegmatis</name>
    <dbReference type="NCBI Taxonomy" id="246196"/>
    <lineage>
        <taxon>Bacteria</taxon>
        <taxon>Bacillati</taxon>
        <taxon>Actinomycetota</taxon>
        <taxon>Actinomycetes</taxon>
        <taxon>Mycobacteriales</taxon>
        <taxon>Mycobacteriaceae</taxon>
        <taxon>Mycolicibacterium</taxon>
    </lineage>
</organism>
<reference key="1">
    <citation type="journal article" date="1998" name="J. Bacteriol.">
        <title>Molecular analysis of the gene encoding F420-dependent glucose-6-phosphate dehydrogenase from Mycobacterium smegmatis.</title>
        <authorList>
            <person name="Purwantini E."/>
            <person name="Daniels L."/>
        </authorList>
    </citation>
    <scope>NUCLEOTIDE SEQUENCE [GENOMIC DNA]</scope>
    <scope>CATALYTIC ACTIVITY</scope>
    <source>
        <strain>ATCC 700084 / mc(2)155</strain>
    </source>
</reference>
<reference key="2">
    <citation type="submission" date="2006-10" db="EMBL/GenBank/DDBJ databases">
        <authorList>
            <person name="Fleischmann R.D."/>
            <person name="Dodson R.J."/>
            <person name="Haft D.H."/>
            <person name="Merkel J.S."/>
            <person name="Nelson W.C."/>
            <person name="Fraser C.M."/>
        </authorList>
    </citation>
    <scope>NUCLEOTIDE SEQUENCE [LARGE SCALE GENOMIC DNA]</scope>
    <source>
        <strain>ATCC 700084 / mc(2)155</strain>
    </source>
</reference>
<reference key="3">
    <citation type="journal article" date="2007" name="Genome Biol.">
        <title>Interrupted coding sequences in Mycobacterium smegmatis: authentic mutations or sequencing errors?</title>
        <authorList>
            <person name="Deshayes C."/>
            <person name="Perrodou E."/>
            <person name="Gallien S."/>
            <person name="Euphrasie D."/>
            <person name="Schaeffer C."/>
            <person name="Van-Dorsselaer A."/>
            <person name="Poch O."/>
            <person name="Lecompte O."/>
            <person name="Reyrat J.-M."/>
        </authorList>
    </citation>
    <scope>NUCLEOTIDE SEQUENCE [LARGE SCALE GENOMIC DNA]</scope>
    <source>
        <strain>ATCC 700084 / mc(2)155</strain>
    </source>
</reference>
<reference key="4">
    <citation type="journal article" date="2009" name="Genome Res.">
        <title>Ortho-proteogenomics: multiple proteomes investigation through orthology and a new MS-based protocol.</title>
        <authorList>
            <person name="Gallien S."/>
            <person name="Perrodou E."/>
            <person name="Carapito C."/>
            <person name="Deshayes C."/>
            <person name="Reyrat J.-M."/>
            <person name="Van Dorsselaer A."/>
            <person name="Poch O."/>
            <person name="Schaeffer C."/>
            <person name="Lecompte O."/>
        </authorList>
    </citation>
    <scope>NUCLEOTIDE SEQUENCE [LARGE SCALE GENOMIC DNA]</scope>
    <source>
        <strain>ATCC 700084 / mc(2)155</strain>
    </source>
</reference>
<reference key="5">
    <citation type="journal article" date="1996" name="J. Bacteriol.">
        <title>Purification of a novel coenzyme F420-dependent glucose-6-phosphate dehydrogenase from Mycobacterium smegmatis.</title>
        <authorList>
            <person name="Purwantini E."/>
            <person name="Daniels L."/>
        </authorList>
    </citation>
    <scope>PROTEIN SEQUENCE OF 2-27</scope>
    <scope>FUNCTION</scope>
    <scope>CATALYTIC ACTIVITY</scope>
    <scope>SUBSTRATE SPECIFICITY</scope>
    <scope>BIOPHYSICOCHEMICAL PROPERTIES</scope>
    <scope>SUBUNIT</scope>
    <source>
        <strain>ATCC 607 / DSM 43465 / mc(2)6 / NCTC 7017 / NRRL B-692</strain>
    </source>
</reference>
<reference key="6">
    <citation type="journal article" date="1996" name="Eur. J. Biochem.">
        <title>Si-face stereospecificity at C5 of coenzyme F420 for F420-dependent glucose-6-phosphate dehydrogenase from Mycobacterium smegmatis and F420-dependent alcohol dehydrogenase from Methanoculleus thermophilicus.</title>
        <authorList>
            <person name="Klein A.R."/>
            <person name="Berk H."/>
            <person name="Purwantini E."/>
            <person name="Daniels L."/>
            <person name="Thauer R.K."/>
        </authorList>
    </citation>
    <scope>STEREOSPECIFICITY</scope>
    <source>
        <strain>ATCC 607 / DSM 43465 / mc(2)6 / NCTC 7017 / NRRL B-692</strain>
    </source>
</reference>
<reference key="7">
    <citation type="journal article" date="2010" name="J. Biol. Chem.">
        <title>Glucose 6-phosphate accumulation in mycobacteria: implications for a novel F420-dependent anti-oxidant defense system.</title>
        <authorList>
            <person name="Hasan M.R."/>
            <person name="Rahman M."/>
            <person name="Jaques S."/>
            <person name="Purwantini E."/>
            <person name="Daniels L."/>
        </authorList>
    </citation>
    <scope>ROLE IN RESISTANCE TO OXIDATIVE STRESS</scope>
    <scope>DISRUPTION PHENOTYPE</scope>
    <source>
        <strain>ATCC 700084 / mc(2)155</strain>
    </source>
</reference>
<comment type="function">
    <text evidence="2 3">Catalyzes the coenzyme F420-dependent oxidation of glucose 6-phosphate (G6P) to 6-phosphogluconolactone. Appears to have a role in resistance to oxidative stress, via its consumption of G6P that serves as a source of reducing power to combat oxidative stress in mycobacteria. Cannot use NAD, NADP, FAD or FMN instead of coenzyme F420 as an electron acceptor. Exhibits nearly no activity with D-mannose-6-phosphate or D-fructose-6-phosphate as substrate.</text>
</comment>
<comment type="catalytic activity">
    <reaction evidence="3 4">
        <text>oxidized coenzyme F420-(gamma-L-Glu)(n) + D-glucose 6-phosphate + H(+) = 6-phospho-D-glucono-1,5-lactone + reduced coenzyme F420-(gamma-L-Glu)(n)</text>
        <dbReference type="Rhea" id="RHEA:27294"/>
        <dbReference type="Rhea" id="RHEA-COMP:12939"/>
        <dbReference type="Rhea" id="RHEA-COMP:14378"/>
        <dbReference type="ChEBI" id="CHEBI:15378"/>
        <dbReference type="ChEBI" id="CHEBI:57955"/>
        <dbReference type="ChEBI" id="CHEBI:61548"/>
        <dbReference type="ChEBI" id="CHEBI:133980"/>
        <dbReference type="ChEBI" id="CHEBI:139511"/>
        <dbReference type="EC" id="1.1.98.2"/>
    </reaction>
</comment>
<comment type="biophysicochemical properties">
    <kinetics>
        <KM evidence="3">0.004 mM for coenzyme F420 (at pH 7 and 40 degrees Celsius)</KM>
        <KM evidence="3">1.6 mM for D-glucose 6-phosphate (at pH 7 and 40 degrees Celsius)</KM>
    </kinetics>
    <phDependence>
        <text evidence="3">Optimum pHs are 5.5 and 8.0.</text>
    </phDependence>
    <temperatureDependence>
        <text evidence="3">Optimum temperature is 60 degrees Celsius.</text>
    </temperatureDependence>
</comment>
<comment type="subunit">
    <text evidence="3">Homodimer.</text>
</comment>
<comment type="disruption phenotype">
    <text evidence="2">Cells lacking this gene are more sensitive than the wild-type to oxidative stress induced by plumbagin and menadione. They display decreased ability to consume G6P and reduce plumbagin and menadione when exposed to these agents.</text>
</comment>
<comment type="miscellaneous">
    <text>Exhibits Si-face stereospecificity with respect to C5 of coenzyme F420.</text>
</comment>
<comment type="similarity">
    <text evidence="5">Belongs to the F420-dependent glucose-6-phosphate dehydrogenase family.</text>
</comment>
<comment type="sequence caution" evidence="5">
    <conflict type="erroneous initiation">
        <sequence resource="EMBL-CDS" id="ABK75077"/>
    </conflict>
    <text>Extended N-terminus.</text>
</comment>
<protein>
    <recommendedName>
        <fullName>F420-dependent glucose-6-phosphate dehydrogenase</fullName>
        <shortName>FGD</shortName>
        <shortName>G6PD</shortName>
        <ecNumber>1.1.98.2</ecNumber>
    </recommendedName>
</protein>
<accession>A0QQJ4</accession>
<accession>I7G2C9</accession>
<accession>O68447</accession>
<evidence type="ECO:0000250" key="1"/>
<evidence type="ECO:0000269" key="2">
    <source>
    </source>
</evidence>
<evidence type="ECO:0000269" key="3">
    <source>
    </source>
</evidence>
<evidence type="ECO:0000269" key="4">
    <source>
    </source>
</evidence>
<evidence type="ECO:0000305" key="5"/>
<feature type="initiator methionine" description="Removed" evidence="3">
    <location>
        <position position="1"/>
    </location>
</feature>
<feature type="chain" id="PRO_0000413596" description="F420-dependent glucose-6-phosphate dehydrogenase">
    <location>
        <begin position="2"/>
        <end position="336"/>
    </location>
</feature>
<feature type="active site" description="Proton donor" evidence="1">
    <location>
        <position position="40"/>
    </location>
</feature>
<feature type="active site" description="Proton acceptor" evidence="1">
    <location>
        <position position="109"/>
    </location>
</feature>
<feature type="binding site" evidence="1">
    <location>
        <position position="39"/>
    </location>
    <ligand>
        <name>coenzyme F420-(gamma-Glu)n</name>
        <dbReference type="ChEBI" id="CHEBI:133980"/>
    </ligand>
</feature>
<feature type="binding site" evidence="1">
    <location>
        <position position="76"/>
    </location>
    <ligand>
        <name>coenzyme F420-(gamma-Glu)n</name>
        <dbReference type="ChEBI" id="CHEBI:133980"/>
    </ligand>
</feature>
<feature type="binding site" evidence="1">
    <location>
        <begin position="107"/>
        <end position="108"/>
    </location>
    <ligand>
        <name>coenzyme F420-(gamma-Glu)n</name>
        <dbReference type="ChEBI" id="CHEBI:133980"/>
    </ligand>
</feature>
<feature type="binding site" evidence="1">
    <location>
        <position position="112"/>
    </location>
    <ligand>
        <name>coenzyme F420-(gamma-Glu)n</name>
        <dbReference type="ChEBI" id="CHEBI:133980"/>
    </ligand>
</feature>
<feature type="binding site" evidence="1">
    <location>
        <begin position="177"/>
        <end position="178"/>
    </location>
    <ligand>
        <name>coenzyme F420-(gamma-Glu)n</name>
        <dbReference type="ChEBI" id="CHEBI:133980"/>
    </ligand>
</feature>
<feature type="binding site" evidence="1">
    <location>
        <begin position="180"/>
        <end position="181"/>
    </location>
    <ligand>
        <name>coenzyme F420-(gamma-Glu)n</name>
        <dbReference type="ChEBI" id="CHEBI:133980"/>
    </ligand>
</feature>
<feature type="binding site" evidence="1">
    <location>
        <position position="195"/>
    </location>
    <ligand>
        <name>substrate</name>
    </ligand>
</feature>
<feature type="binding site" evidence="1">
    <location>
        <position position="198"/>
    </location>
    <ligand>
        <name>substrate</name>
    </ligand>
</feature>
<feature type="binding site" evidence="1">
    <location>
        <position position="259"/>
    </location>
    <ligand>
        <name>substrate</name>
    </ligand>
</feature>
<feature type="binding site" evidence="1">
    <location>
        <position position="283"/>
    </location>
    <ligand>
        <name>substrate</name>
    </ligand>
</feature>
<keyword id="KW-0119">Carbohydrate metabolism</keyword>
<keyword id="KW-0903">Direct protein sequencing</keyword>
<keyword id="KW-0560">Oxidoreductase</keyword>
<keyword id="KW-1185">Reference proteome</keyword>
<gene>
    <name type="primary">fgd</name>
    <name type="synonym">fgd1</name>
    <name type="ordered locus">MSMEG_0777</name>
    <name type="ordered locus">MSMEI_0761</name>
</gene>
<sequence>MAELKLGYKASAEQFAPRELVELAVLAESAGMDSATVSDHFQPWRHEGGHAPFSLAWMTAVGERTKNLVLGTSVLTPTFRYNPAVIAQAFATMGCLYPGRIFLGVGTGEALNEIATGYAGEWPEFKERFARLRESVRLMRELWLGDRVDFDGEYYRTKGASIYDVPEGGIPVYIAAGGPVVAKYAGRAGDGFICTSGKGEELYAEKLIPAVKEGAAAADRDADAIDRMIEIKISYDTDPELALENTRFWAPLSLTAEQKHSIDDPIEMEKAADALPIEQVAKRWIVASDPDEAVEKVGQYVKWGLNHLVFHAPGHDQRRFLELFKRDLEPRLRKLA</sequence>